<dbReference type="EC" id="1.5.1.50" evidence="1"/>
<dbReference type="EC" id="1.5.1.3" evidence="1"/>
<dbReference type="EMBL" id="CP000946">
    <property type="protein sequence ID" value="ACA77668.1"/>
    <property type="molecule type" value="Genomic_DNA"/>
</dbReference>
<dbReference type="RefSeq" id="WP_000520804.1">
    <property type="nucleotide sequence ID" value="NZ_MTFT01000006.1"/>
</dbReference>
<dbReference type="SMR" id="B1IQY4"/>
<dbReference type="KEGG" id="ecl:EcolC_2024"/>
<dbReference type="HOGENOM" id="CLU_010194_1_3_6"/>
<dbReference type="GO" id="GO:0004146">
    <property type="term" value="F:dihydrofolate reductase activity"/>
    <property type="evidence" value="ECO:0007669"/>
    <property type="project" value="UniProtKB-EC"/>
</dbReference>
<dbReference type="GO" id="GO:0006730">
    <property type="term" value="P:one-carbon metabolic process"/>
    <property type="evidence" value="ECO:0007669"/>
    <property type="project" value="UniProtKB-KW"/>
</dbReference>
<dbReference type="CDD" id="cd05357">
    <property type="entry name" value="PR_SDR_c"/>
    <property type="match status" value="1"/>
</dbReference>
<dbReference type="FunFam" id="3.40.50.720:FF:000225">
    <property type="entry name" value="Dihydrofolate reductase FolM"/>
    <property type="match status" value="1"/>
</dbReference>
<dbReference type="Gene3D" id="3.40.50.720">
    <property type="entry name" value="NAD(P)-binding Rossmann-like Domain"/>
    <property type="match status" value="1"/>
</dbReference>
<dbReference type="InterPro" id="IPR036291">
    <property type="entry name" value="NAD(P)-bd_dom_sf"/>
</dbReference>
<dbReference type="InterPro" id="IPR020904">
    <property type="entry name" value="Sc_DH/Rdtase_CS"/>
</dbReference>
<dbReference type="InterPro" id="IPR002347">
    <property type="entry name" value="SDR_fam"/>
</dbReference>
<dbReference type="NCBIfam" id="NF005066">
    <property type="entry name" value="PRK06483.1"/>
    <property type="match status" value="1"/>
</dbReference>
<dbReference type="PANTHER" id="PTHR43639:SF6">
    <property type="entry name" value="DIHYDROMONAPTERIN REDUCTASE"/>
    <property type="match status" value="1"/>
</dbReference>
<dbReference type="PANTHER" id="PTHR43639">
    <property type="entry name" value="OXIDOREDUCTASE, SHORT-CHAIN DEHYDROGENASE/REDUCTASE FAMILY (AFU_ORTHOLOGUE AFUA_5G02870)"/>
    <property type="match status" value="1"/>
</dbReference>
<dbReference type="Pfam" id="PF13561">
    <property type="entry name" value="adh_short_C2"/>
    <property type="match status" value="1"/>
</dbReference>
<dbReference type="PRINTS" id="PR00081">
    <property type="entry name" value="GDHRDH"/>
</dbReference>
<dbReference type="SUPFAM" id="SSF51735">
    <property type="entry name" value="NAD(P)-binding Rossmann-fold domains"/>
    <property type="match status" value="1"/>
</dbReference>
<dbReference type="PROSITE" id="PS00061">
    <property type="entry name" value="ADH_SHORT"/>
    <property type="match status" value="1"/>
</dbReference>
<protein>
    <recommendedName>
        <fullName>Dihydromonapterin reductase</fullName>
        <shortName>H(2)-MPt reductase</shortName>
        <ecNumber evidence="1">1.5.1.50</ecNumber>
    </recommendedName>
    <alternativeName>
        <fullName>Dihydrofolate reductase</fullName>
        <shortName>DHFR</shortName>
        <ecNumber evidence="1">1.5.1.3</ecNumber>
    </alternativeName>
</protein>
<organism>
    <name type="scientific">Escherichia coli (strain ATCC 8739 / DSM 1576 / NBRC 3972 / NCIMB 8545 / WDCM 00012 / Crooks)</name>
    <dbReference type="NCBI Taxonomy" id="481805"/>
    <lineage>
        <taxon>Bacteria</taxon>
        <taxon>Pseudomonadati</taxon>
        <taxon>Pseudomonadota</taxon>
        <taxon>Gammaproteobacteria</taxon>
        <taxon>Enterobacterales</taxon>
        <taxon>Enterobacteriaceae</taxon>
        <taxon>Escherichia</taxon>
    </lineage>
</organism>
<proteinExistence type="inferred from homology"/>
<gene>
    <name type="primary">folM</name>
    <name type="ordered locus">EcolC_2024</name>
</gene>
<keyword id="KW-0521">NADP</keyword>
<keyword id="KW-0554">One-carbon metabolism</keyword>
<keyword id="KW-0560">Oxidoreductase</keyword>
<feature type="chain" id="PRO_0000339390" description="Dihydromonapterin reductase">
    <location>
        <begin position="1"/>
        <end position="240"/>
    </location>
</feature>
<feature type="active site" description="Proton acceptor" evidence="2">
    <location>
        <position position="152"/>
    </location>
</feature>
<evidence type="ECO:0000250" key="1">
    <source>
        <dbReference type="UniProtKB" id="P0AFS3"/>
    </source>
</evidence>
<evidence type="ECO:0000255" key="2">
    <source>
        <dbReference type="PROSITE-ProRule" id="PRU10001"/>
    </source>
</evidence>
<evidence type="ECO:0000305" key="3"/>
<accession>B1IQY4</accession>
<name>FOLM_ECOLC</name>
<sequence length="240" mass="26348">MGKTQPLPILITGGGRRIGLALAWHFINQKQPVIVSYRTHYPAIDGLINAGAQCIQADFSTNDGVMAFADEVLKSTHGLRAILHNASAWMAEKPGAPLADVLACMMQIHVNTPYLLNHALERLLRGHGHAASDIIHFTDYVVERGSDKHIAYAASKAALDNMTRSFARKLAPEVKVNSIAPSLILFNEHDDAEYRQQALNKSLMKTAPGEKEVIDLVDYLLTSCFVTGRSFPLDGGRHLR</sequence>
<comment type="function">
    <text evidence="1">Catalyzes the reduction of dihydromonapterin to tetrahydromonapterin. Also has lower activity with dihydrofolate.</text>
</comment>
<comment type="catalytic activity">
    <reaction evidence="1">
        <text>(6S)-5,6,7,8-tetrahydrofolate + NADP(+) = 7,8-dihydrofolate + NADPH + H(+)</text>
        <dbReference type="Rhea" id="RHEA:15009"/>
        <dbReference type="ChEBI" id="CHEBI:15378"/>
        <dbReference type="ChEBI" id="CHEBI:57451"/>
        <dbReference type="ChEBI" id="CHEBI:57453"/>
        <dbReference type="ChEBI" id="CHEBI:57783"/>
        <dbReference type="ChEBI" id="CHEBI:58349"/>
        <dbReference type="EC" id="1.5.1.3"/>
    </reaction>
</comment>
<comment type="catalytic activity">
    <reaction evidence="1">
        <text>7,8-dihydromonapterin + NADPH + H(+) = 5,6,7,8-tetrahydromonapterin + NADP(+)</text>
        <dbReference type="Rhea" id="RHEA:34847"/>
        <dbReference type="ChEBI" id="CHEBI:15378"/>
        <dbReference type="ChEBI" id="CHEBI:57783"/>
        <dbReference type="ChEBI" id="CHEBI:58349"/>
        <dbReference type="ChEBI" id="CHEBI:71175"/>
        <dbReference type="ChEBI" id="CHEBI:71177"/>
        <dbReference type="EC" id="1.5.1.50"/>
    </reaction>
</comment>
<comment type="similarity">
    <text evidence="3">Belongs to the short-chain dehydrogenases/reductases (SDR) family. FolM subfamily.</text>
</comment>
<reference key="1">
    <citation type="submission" date="2008-02" db="EMBL/GenBank/DDBJ databases">
        <title>Complete sequence of Escherichia coli C str. ATCC 8739.</title>
        <authorList>
            <person name="Copeland A."/>
            <person name="Lucas S."/>
            <person name="Lapidus A."/>
            <person name="Glavina del Rio T."/>
            <person name="Dalin E."/>
            <person name="Tice H."/>
            <person name="Bruce D."/>
            <person name="Goodwin L."/>
            <person name="Pitluck S."/>
            <person name="Kiss H."/>
            <person name="Brettin T."/>
            <person name="Detter J.C."/>
            <person name="Han C."/>
            <person name="Kuske C.R."/>
            <person name="Schmutz J."/>
            <person name="Larimer F."/>
            <person name="Land M."/>
            <person name="Hauser L."/>
            <person name="Kyrpides N."/>
            <person name="Mikhailova N."/>
            <person name="Ingram L."/>
            <person name="Richardson P."/>
        </authorList>
    </citation>
    <scope>NUCLEOTIDE SEQUENCE [LARGE SCALE GENOMIC DNA]</scope>
    <source>
        <strain>ATCC 8739 / DSM 1576 / NBRC 3972 / NCIMB 8545 / WDCM 00012 / Crooks</strain>
    </source>
</reference>